<comment type="function">
    <text evidence="3 4 5 6 7">Extended-spectrum beta-lactamase (ESBL) which confers resistance to penicillins, as well as first, third and fourth-generation cephalosporins (PubMed:11502535, PubMed:19656947, PubMed:20696873, PubMed:21220532). Has modest carbapenem-hydrolyzing activity (PubMed:11502535, PubMed:19656947, PubMed:25485972). Has cefotaxime-hydrolyzing activity (PubMed:11502535, PubMed:19656947).</text>
</comment>
<comment type="catalytic activity">
    <reaction evidence="3 4 5 6 7">
        <text>a beta-lactam + H2O = a substituted beta-amino acid</text>
        <dbReference type="Rhea" id="RHEA:20401"/>
        <dbReference type="ChEBI" id="CHEBI:15377"/>
        <dbReference type="ChEBI" id="CHEBI:35627"/>
        <dbReference type="ChEBI" id="CHEBI:140347"/>
        <dbReference type="EC" id="3.5.2.6"/>
    </reaction>
</comment>
<comment type="activity regulation">
    <text evidence="3 5 6">Inhibited by the beta-lactamase-blocking agents clavulanic acid, sulbactam and tazobactam.</text>
</comment>
<comment type="biophysicochemical properties">
    <kinetics>
        <KM evidence="3">25.8 uM for amoxicillin (at pH 7.0 and 30 degrees Celsius)</KM>
        <KM evidence="3">4 uM for benzylpenicillin (at pH 7.0 and 30 degrees Celsius)</KM>
        <KM evidence="5">87.6 uM for benzylpenicillin (at pH 7.0 and 25 degrees Celsius)</KM>
        <KM evidence="3">13.3 uM for ticarcillin (at pH 7.0 and 30 degrees Celsius)</KM>
        <KM evidence="3">22.8 uM for piperacillin (at pH 7.0 and 30 degrees Celsius)</KM>
        <KM evidence="3">3 uM for cefalotin (at pH 7.0 and 30 degrees Celsius)</KM>
        <KM evidence="5">53.9 uM for cefalotin (at pH 7.0 and 25 degrees Celsius)</KM>
        <KM evidence="5">98.2 uM for ceftazidime (at pH 7.0 and 25 degrees Celsius)</KM>
        <KM evidence="5">261 uM for cefotaxime (at pH 7.0 and 25 degrees Celsius)</KM>
        <KM evidence="3">2.5 uM for cefotaxime (at pH 7.0 and 30 degrees Celsius)</KM>
        <KM evidence="3">7.7 uM for cephaloridine (at pH 7.0 and 30 degrees Celsius)</KM>
        <KM evidence="3">1900 uM for cefepime (at pH 7.0 and 30 degrees Celsius)</KM>
        <KM evidence="4">5 uM for nitrocefin (at pH 7.0)</KM>
        <KM evidence="3">0.45 uM for imipenem (at pH 7.0 and 30 degrees Celsius)</KM>
        <KM evidence="4">0.7 uM for imipenem (at pH 7.0)</KM>
        <KM evidence="5">0.87 uM for imipenem (at pH 7.0 and 25 degrees Celsius)</KM>
        <KM evidence="7">0.9 uM for meropenem (at pH 7.0)</KM>
        <KM evidence="7">2.2 uM for ertapenem (at pH 7.0)</KM>
        <KM evidence="7">1 uM for doripenem (at pH 7.0)</KM>
        <text evidence="3 4 5 7">kcat is 0.7 sec(-1) with amoxicillin as substrate (at pH 7.0 and 30 degrees Celsius) (PubMed:11502535). kcat is 0.4 sec(-1) with benzylpenicillin as substrate (at pH 7.0 and 30 degrees Celsius) (PubMed:11502535). kcat is 5.75 sec(-1) with benzylpenicillin as substrate (at pH 7.0 and 25 degrees Celsius) (PubMed:20696873). kcat is 0.06 sec(-1) with ticarcillin as substrate (at pH 7.0 and 30 degrees Celsius) (PubMed:11502535). kcat is 0.3 sec(-1) with piperacillin as substrate (at pH 7.0 and 30 degrees Celsius) (PubMed:11502535). kcat is 0.3 sec(-1) with cefalotin as substrate (at pH 7.0 and 30 degrees Celsius) (PubMed:11502535). kcat is 2.94 sec(-1) with cefalotin as substrate (at pH 7.0 and 25 degrees Celsius) (PubMed:20696873). kcat is 2.2 sec(-1) with cefotaxime as substrate (at pH 7.0 and 30 degrees Celsius) (PubMed:11502535). kcat is 37.2 sec(-1) with cefotaxime as substrate (at pH 7.0 and 25 degrees Celsius) (PubMed:20696873). kcat is 0.21 sec(-1) with ceftazidime as substrate (at pH 7.0 and 25 degrees Celsius) (PubMed:20696873). kcat is 0.5 sec(-1) with cephaloridine as substrate (at pH 7.0 and 30 degrees Celsius) (PubMed:11502535). kcat is 1.1 sec(-1) with cefepime as substrate (at pH 7.0 and 30 degrees Celsius) (PubMed:11502535). kcat is 7.2 sec(-1) with nitrocefin as substrate (at pH 7.0) (PubMed:19656947). kcat is 0.004 sec(-1) with imipenem as substrate (at pH 7.0 and 30 degrees Celsius) (PubMed:11502535). kcat is 0.016 sec(-1) with imipenem as substrate (at pH 7.0 and 25 degrees Celsius) (PubMed:20696873). kcat is 0.00094 sec(-1) with meropenem as substrate (at pH 7.0) (PubMed:25485972). kcat is 0.00076 sec(-1) with ertapenem as substrate (at pH 7.0) (PubMed:25485972). kcat is 0.00063 sec(-1) with doripenem as substrate (at pH 7.0) (PubMed:25485972).</text>
    </kinetics>
</comment>
<comment type="induction">
    <text evidence="8">Expression may be regulated by promoter elements associated with upstream probable integrase gene Intl.</text>
</comment>
<comment type="miscellaneous">
    <text evidence="11">The class A beta-lactamase family has a specific amino-acid numbering system, sometimes called Ambler or ABL numbering and often misspelt as Amber. A multiple sequence alignment was used to derive a consensus sequence and then the consensus was numbered taking into account insertions and deletions. This allows use of identical numbers, e.g. for active site residues, despite differences in protein length. UniProt always uses natural numbering of residues, hence there appear to be differences in numbering between this entry and some papers.</text>
</comment>
<comment type="similarity">
    <text evidence="9">Belongs to the class-A beta-lactamase family.</text>
</comment>
<sequence>MRFIHALLLAGIAHSAYASEKLTFKTDLEKLEREKAAQIGVAIVDPQGEIVAGHRMAQRFAMCSTFKFPLAALVFERIDSGTERGDRKLSYGPDMIVEWSPATERFLASGHMTVLEAAQAAVQLSDNGATNLLLREIGGPAAMTQYFRKIGDSVSRLDRKEPEMNDNTPGDLRDTTTPIAMARTVAKVLYGGALTSTSTHTIERWLIGNQTGDATLRAGFPKDWVVGEKTGTCANGGRNDIGFFKAQERDYAVAVYTTAPKLSAVERDELVASVGQVITQLILSTDK</sequence>
<reference evidence="12" key="1">
    <citation type="journal article" date="2001" name="Antimicrob. Agents Chemother.">
        <title>GES-2, a class A beta-lactamase from Pseudomonas aeruginosa with increased hydrolysis of imipenem.</title>
        <authorList>
            <person name="Poirel L."/>
            <person name="Weldhagen G.F."/>
            <person name="Naas T."/>
            <person name="De Champs C."/>
            <person name="Dove M.G."/>
            <person name="Nordmann P."/>
        </authorList>
    </citation>
    <scope>NUCLEOTIDE SEQUENCE [GENOMIC DNA]</scope>
    <scope>FUNCTION</scope>
    <scope>CATALYTIC ACTIVITY</scope>
    <scope>ACTIVITY REGULATION</scope>
    <scope>BIOPHYSICOCHEMICAL PROPERTIES</scope>
    <scope>INDUCTION</scope>
    <source>
        <strain evidence="8">GW-1</strain>
    </source>
</reference>
<reference evidence="13" key="2">
    <citation type="submission" date="2001-02" db="EMBL/GenBank/DDBJ databases">
        <title>Outbreak of nosocomial Pseudomonas aeruginosa strains expressing the expanded-spectrum beta-lactamase GES-2 in South Africa.</title>
        <authorList>
            <person name="Poirel L."/>
            <person name="Weldhagen G."/>
            <person name="De Champs C."/>
            <person name="Nordmann P."/>
        </authorList>
    </citation>
    <scope>NUCLEOTIDE SEQUENCE [GENOMIC DNA]</scope>
    <source>
        <strain evidence="13">MW41</strain>
    </source>
</reference>
<reference evidence="9" key="3">
    <citation type="journal article" date="1991" name="Biochem. J.">
        <title>A standard numbering scheme for the class A beta-lactamases.</title>
        <authorList>
            <person name="Ambler R.P."/>
            <person name="Coulson A.F."/>
            <person name="Frere J.M."/>
            <person name="Ghuysen J.M."/>
            <person name="Joris B."/>
            <person name="Forsman M."/>
            <person name="Levesque R.C."/>
            <person name="Tiraby G."/>
            <person name="Waley S.G."/>
        </authorList>
    </citation>
    <scope>AMINO ACID NUMBERING SCHEME</scope>
</reference>
<reference evidence="9" key="4">
    <citation type="journal article" date="2009" name="J. Biol. Chem.">
        <title>Mechanistic basis for the emergence of catalytic competence against carbapenem antibiotics by the GES family of beta-lactamases.</title>
        <authorList>
            <person name="Frase H."/>
            <person name="Shi Q."/>
            <person name="Testero S.A."/>
            <person name="Mobashery S."/>
            <person name="Vakulenko S.B."/>
        </authorList>
    </citation>
    <scope>FUNCTION</scope>
    <scope>CATALYTIC ACTIVITY</scope>
    <scope>BIOPHYSICOCHEMICAL PROPERTIES</scope>
</reference>
<reference evidence="9" key="5">
    <citation type="journal article" date="2010" name="Antimicrob. Agents Chemother.">
        <title>Comparative biochemical and computational study of the role of naturally occurring mutations at Ambler positions 104 and 170 in GES beta-lactamases.</title>
        <authorList>
            <person name="Kotsakis S.D."/>
            <person name="Miriagou V."/>
            <person name="Tzelepi E."/>
            <person name="Tzouvelekis L.S."/>
        </authorList>
    </citation>
    <scope>FUNCTION</scope>
    <scope>CATALYTIC ACTIVITY</scope>
    <scope>ACTIVITY REGULATION</scope>
    <scope>BIOPHYSICOCHEMICAL PROPERTIES</scope>
    <scope>MUTAGENESIS OF GLU-98 AND ASN-165</scope>
</reference>
<reference evidence="9" key="6">
    <citation type="journal article" date="2011" name="Antimicrob. Agents Chemother.">
        <title>Importance of position 170 in the inhibition of GES-type beta-lactamases by clavulanic acid.</title>
        <authorList>
            <person name="Frase H."/>
            <person name="Toth M."/>
            <person name="Champion M.M."/>
            <person name="Antunes N.T."/>
            <person name="Vakulenko S.B."/>
        </authorList>
    </citation>
    <scope>FUNCTION</scope>
    <scope>CATALYTIC ACTIVITY</scope>
    <scope>ACTIVITY REGULATION</scope>
</reference>
<reference evidence="15" key="7">
    <citation type="submission" date="2010-06" db="PDB data bank">
        <title>Inhibition of the GES-2 beta-Lactamse by Tazobactam: Detection of Reaction Intermediates by UV and Mass Spectrometry and X-Ray Crystallography.</title>
        <authorList>
            <person name="Frase H."/>
            <person name="Smith C.A."/>
            <person name="Toth M."/>
            <person name="Champion M.M."/>
            <person name="Mobashery S."/>
            <person name="Vakulenko S.B."/>
        </authorList>
    </citation>
    <scope>X-RAY CRYSTALLOGRAPHY (1.65 ANGSTROMS) OF 19-287</scope>
    <scope>DISULFIDE BOND</scope>
</reference>
<reference evidence="14 16" key="8">
    <citation type="journal article" date="2015" name="Biochemistry">
        <title>Kinetic and structural requirements for carbapenemase activity in GES-type beta-lactamases.</title>
        <authorList>
            <person name="Stewart N.K."/>
            <person name="Smith C.A."/>
            <person name="Frase H."/>
            <person name="Black D.J."/>
            <person name="Vakulenko S.B."/>
        </authorList>
    </citation>
    <scope>X-RAY CRYSTALLOGRAPHY (1.40 ANGSTROMS) IN COMPLEX WITH ERTAPENEM</scope>
    <scope>FUNCTION</scope>
    <scope>CATALYTIC ACTIVITY</scope>
    <scope>BIOPHYSICOCHEMICAL PROPERTIES</scope>
    <scope>DISULFIDE BOND</scope>
</reference>
<keyword id="KW-0002">3D-structure</keyword>
<keyword id="KW-0046">Antibiotic resistance</keyword>
<keyword id="KW-1015">Disulfide bond</keyword>
<keyword id="KW-0378">Hydrolase</keyword>
<keyword id="KW-0732">Signal</keyword>
<evidence type="ECO:0000250" key="1">
    <source>
        <dbReference type="UniProtKB" id="A0A5R8T042"/>
    </source>
</evidence>
<evidence type="ECO:0000255" key="2"/>
<evidence type="ECO:0000269" key="3">
    <source>
    </source>
</evidence>
<evidence type="ECO:0000269" key="4">
    <source>
    </source>
</evidence>
<evidence type="ECO:0000269" key="5">
    <source>
    </source>
</evidence>
<evidence type="ECO:0000269" key="6">
    <source>
    </source>
</evidence>
<evidence type="ECO:0000269" key="7">
    <source>
    </source>
</evidence>
<evidence type="ECO:0000303" key="8">
    <source>
    </source>
</evidence>
<evidence type="ECO:0000305" key="9"/>
<evidence type="ECO:0000305" key="10">
    <source>
    </source>
</evidence>
<evidence type="ECO:0000305" key="11">
    <source>
    </source>
</evidence>
<evidence type="ECO:0000312" key="12">
    <source>
        <dbReference type="EMBL" id="AAK58421.1"/>
    </source>
</evidence>
<evidence type="ECO:0000312" key="13">
    <source>
        <dbReference type="EMBL" id="AAM08182.1"/>
    </source>
</evidence>
<evidence type="ECO:0007744" key="14">
    <source>
        <dbReference type="PDB" id="3NI9"/>
    </source>
</evidence>
<evidence type="ECO:0007744" key="15">
    <source>
        <dbReference type="PDB" id="3NIA"/>
    </source>
</evidence>
<evidence type="ECO:0007744" key="16">
    <source>
        <dbReference type="PDB" id="4QU3"/>
    </source>
</evidence>
<evidence type="ECO:0007829" key="17">
    <source>
        <dbReference type="PDB" id="4QU3"/>
    </source>
</evidence>
<protein>
    <recommendedName>
        <fullName evidence="8">Beta-lactamase GES-2</fullName>
        <ecNumber evidence="3 4 5 6 7">3.5.2.6</ecNumber>
    </recommendedName>
</protein>
<organism evidence="12">
    <name type="scientific">Pseudomonas aeruginosa</name>
    <dbReference type="NCBI Taxonomy" id="287"/>
    <lineage>
        <taxon>Bacteria</taxon>
        <taxon>Pseudomonadati</taxon>
        <taxon>Pseudomonadota</taxon>
        <taxon>Gammaproteobacteria</taxon>
        <taxon>Pseudomonadales</taxon>
        <taxon>Pseudomonadaceae</taxon>
        <taxon>Pseudomonas</taxon>
    </lineage>
</organism>
<feature type="signal peptide" evidence="2">
    <location>
        <begin position="1"/>
        <end position="18"/>
    </location>
</feature>
<feature type="chain" id="PRO_5010977131" description="Beta-lactamase GES-2" evidence="2">
    <location>
        <begin position="19"/>
        <end position="287"/>
    </location>
</feature>
<feature type="active site" description="Nucleophile; acyl-ester intermediate" evidence="1">
    <location>
        <position position="64"/>
    </location>
</feature>
<feature type="binding site" evidence="1">
    <location>
        <position position="67"/>
    </location>
    <ligand>
        <name>a beta-lactam</name>
        <dbReference type="ChEBI" id="CHEBI:35627"/>
    </ligand>
</feature>
<feature type="binding site" evidence="1">
    <location>
        <position position="125"/>
    </location>
    <ligand>
        <name>a beta-lactam</name>
        <dbReference type="ChEBI" id="CHEBI:35627"/>
    </ligand>
</feature>
<feature type="binding site" evidence="1">
    <location>
        <position position="161"/>
    </location>
    <ligand>
        <name>a beta-lactam</name>
        <dbReference type="ChEBI" id="CHEBI:35627"/>
    </ligand>
</feature>
<feature type="disulfide bond" evidence="7 14 15">
    <location>
        <begin position="63"/>
        <end position="233"/>
    </location>
</feature>
<feature type="mutagenesis site" description="Increases catalytic efficiency about 65-fold, with respect to ceftazidime. Increases catalytic efficiency about 8-fold, with respect to cefotaxime. Increases resistance to ceftazidime about 60-fold, and to aztreonam about 20-fold, in DH5alpha E.coli strain. Increases catalytic efficiency with respect to benzylpenicillin and cephalothin; when associated with G-165. Increases resistance to ceftazidime about 500-fold, in DH5alpha E.coli strain; when associated with G-165. Increases resistance to aztreonam about 60-fold in DH5alpha E.coli strain; when associated with G-165. Increases catalytic efficiency with respect to benzylpenicillin and cephalothin; when associated with S-165. Facilitates hydrolysis of cefoxitin, which is undetectable in wild-type; when associated with S-165. Increases catalytic efficiency about 30-fold, with respect to ceftazidime; when associated with S-165. Increases resistance to cefoxitin about 16-fold in DH5alpha E.coli strain; when associated with S-165. Increases resistance to ceftazidime about 8-fold in DH5alpha E.coli strain; when associated with S-165." evidence="5">
    <original>E</original>
    <variation>K</variation>
    <location>
        <position position="98"/>
    </location>
</feature>
<feature type="mutagenesis site" description="Decreases catalytic efficiency about 4-fold, with respect to the carbapenem antibiotic, imipenem. Increases catalytic efficiency with respect to penicillins and cephalosporins. Increases resistance to ceftazidime about 16-fold, in DH5alpha E.coli strain. Increases catalytic efficiency with respect to benzylpenicillin and cephalothin; when associated with K-98. Increases resistance to ceftazidime about 500-fold, in DH5alpha E.coli strain; when associated with K-98. Increases resistance to aztreonam about 60-fold in DH5alpha E.coli strain; when associated with K-98." evidence="5">
    <original>N</original>
    <variation>G</variation>
    <location>
        <position position="165"/>
    </location>
</feature>
<feature type="mutagenesis site" description="Increases catalytic efficiency about 5-fold with respect to benzylpenicillin. Increases catalytic efficiency about 50-fold with respect to cefalotin. Facilitates hydrolysis of cefoxitin, which is undetectable in wild-type. Decreases catalytic efficiency about 5-fold, with respect to cefotaxime. Increases catalytic efficiency about 10-fold with respect to imipenem. Increases catalytic efficiency with respect to benzylpenicillin and cephalothin; when associated with K-98. Facilitates hydrolysis of cefoxitin, which is undetectable in wild-type; when associated with K-98. Increases catalytic efficiency about 30-fold, with respect to ceftazidime; when associated with K-98. Increases resistance to cefoxitin about 16-fold in DH5alpha E.coli strain; when associated with K-98. Increases resistance to ceftazidime about 8-fold in DH5alpha E.coli strain; when associated with K-98." evidence="5">
    <original>N</original>
    <variation>S</variation>
    <location>
        <position position="165"/>
    </location>
</feature>
<feature type="helix" evidence="17">
    <location>
        <begin position="20"/>
        <end position="35"/>
    </location>
</feature>
<feature type="strand" evidence="17">
    <location>
        <begin position="38"/>
        <end position="44"/>
    </location>
</feature>
<feature type="strand" evidence="17">
    <location>
        <begin position="50"/>
        <end position="55"/>
    </location>
</feature>
<feature type="helix" evidence="17">
    <location>
        <begin position="63"/>
        <end position="66"/>
    </location>
</feature>
<feature type="helix" evidence="17">
    <location>
        <begin position="67"/>
        <end position="80"/>
    </location>
</feature>
<feature type="strand" evidence="17">
    <location>
        <begin position="81"/>
        <end position="83"/>
    </location>
</feature>
<feature type="strand" evidence="17">
    <location>
        <begin position="88"/>
        <end position="90"/>
    </location>
</feature>
<feature type="helix" evidence="17">
    <location>
        <begin position="93"/>
        <end position="95"/>
    </location>
</feature>
<feature type="helix" evidence="17">
    <location>
        <begin position="101"/>
        <end position="106"/>
    </location>
</feature>
<feature type="turn" evidence="17">
    <location>
        <begin position="107"/>
        <end position="110"/>
    </location>
</feature>
<feature type="strand" evidence="17">
    <location>
        <begin position="111"/>
        <end position="113"/>
    </location>
</feature>
<feature type="helix" evidence="17">
    <location>
        <begin position="114"/>
        <end position="124"/>
    </location>
</feature>
<feature type="helix" evidence="17">
    <location>
        <begin position="127"/>
        <end position="137"/>
    </location>
</feature>
<feature type="helix" evidence="17">
    <location>
        <begin position="139"/>
        <end position="149"/>
    </location>
</feature>
<feature type="helix" evidence="17">
    <location>
        <begin position="163"/>
        <end position="165"/>
    </location>
</feature>
<feature type="helix" evidence="17">
    <location>
        <begin position="178"/>
        <end position="190"/>
    </location>
</feature>
<feature type="strand" evidence="17">
    <location>
        <begin position="191"/>
        <end position="194"/>
    </location>
</feature>
<feature type="helix" evidence="17">
    <location>
        <begin position="196"/>
        <end position="207"/>
    </location>
</feature>
<feature type="turn" evidence="17">
    <location>
        <begin position="213"/>
        <end position="215"/>
    </location>
</feature>
<feature type="helix" evidence="17">
    <location>
        <begin position="216"/>
        <end position="219"/>
    </location>
</feature>
<feature type="strand" evidence="17">
    <location>
        <begin position="224"/>
        <end position="233"/>
    </location>
</feature>
<feature type="turn" evidence="17">
    <location>
        <begin position="234"/>
        <end position="236"/>
    </location>
</feature>
<feature type="strand" evidence="17">
    <location>
        <begin position="237"/>
        <end position="246"/>
    </location>
</feature>
<feature type="strand" evidence="17">
    <location>
        <begin position="249"/>
        <end position="258"/>
    </location>
</feature>
<feature type="helix" evidence="17">
    <location>
        <begin position="264"/>
        <end position="285"/>
    </location>
</feature>
<accession>Q93F76</accession>
<gene>
    <name evidence="8 12" type="primary">blaGES-2</name>
    <name evidence="10" type="synonym">bla</name>
</gene>
<dbReference type="EC" id="3.5.2.6" evidence="3 4 5 6 7"/>
<dbReference type="EMBL" id="AF326355">
    <property type="protein sequence ID" value="AAK58421.1"/>
    <property type="molecule type" value="Genomic_DNA"/>
</dbReference>
<dbReference type="EMBL" id="AF347074">
    <property type="protein sequence ID" value="AAM08182.1"/>
    <property type="molecule type" value="Genomic_DNA"/>
</dbReference>
<dbReference type="PDB" id="3NI9">
    <property type="method" value="X-ray"/>
    <property type="resolution" value="2.00 A"/>
    <property type="chains" value="A/B=19-287"/>
</dbReference>
<dbReference type="PDB" id="3NIA">
    <property type="method" value="X-ray"/>
    <property type="resolution" value="1.65 A"/>
    <property type="chains" value="A=19-287"/>
</dbReference>
<dbReference type="PDB" id="4QU3">
    <property type="method" value="X-ray"/>
    <property type="resolution" value="1.40 A"/>
    <property type="chains" value="A/B=1-287"/>
</dbReference>
<dbReference type="PDBsum" id="3NI9"/>
<dbReference type="PDBsum" id="3NIA"/>
<dbReference type="PDBsum" id="4QU3"/>
<dbReference type="SMR" id="Q93F76"/>
<dbReference type="CARD" id="ARO:3002331">
    <property type="molecule name" value="GES-2"/>
    <property type="mechanism identifier" value="ARO:0001004"/>
    <property type="mechanism name" value="antibiotic inactivation"/>
</dbReference>
<dbReference type="KEGG" id="ag:AAK58421"/>
<dbReference type="BRENDA" id="3.5.2.6">
    <property type="organism ID" value="5087"/>
</dbReference>
<dbReference type="EvolutionaryTrace" id="Q93F76"/>
<dbReference type="GO" id="GO:0008800">
    <property type="term" value="F:beta-lactamase activity"/>
    <property type="evidence" value="ECO:0007669"/>
    <property type="project" value="UniProtKB-EC"/>
</dbReference>
<dbReference type="GO" id="GO:0030655">
    <property type="term" value="P:beta-lactam antibiotic catabolic process"/>
    <property type="evidence" value="ECO:0007669"/>
    <property type="project" value="InterPro"/>
</dbReference>
<dbReference type="GO" id="GO:0046677">
    <property type="term" value="P:response to antibiotic"/>
    <property type="evidence" value="ECO:0007669"/>
    <property type="project" value="UniProtKB-KW"/>
</dbReference>
<dbReference type="Gene3D" id="3.40.710.10">
    <property type="entry name" value="DD-peptidase/beta-lactamase superfamily"/>
    <property type="match status" value="1"/>
</dbReference>
<dbReference type="InterPro" id="IPR012338">
    <property type="entry name" value="Beta-lactam/transpept-like"/>
</dbReference>
<dbReference type="InterPro" id="IPR045155">
    <property type="entry name" value="Beta-lactam_cat"/>
</dbReference>
<dbReference type="InterPro" id="IPR000871">
    <property type="entry name" value="Beta-lactam_class-A"/>
</dbReference>
<dbReference type="NCBIfam" id="NF033103">
    <property type="entry name" value="bla_class_A"/>
    <property type="match status" value="1"/>
</dbReference>
<dbReference type="NCBIfam" id="NF012103">
    <property type="entry name" value="blaGES"/>
    <property type="match status" value="1"/>
</dbReference>
<dbReference type="PANTHER" id="PTHR35333">
    <property type="entry name" value="BETA-LACTAMASE"/>
    <property type="match status" value="1"/>
</dbReference>
<dbReference type="PANTHER" id="PTHR35333:SF3">
    <property type="entry name" value="BETA-LACTAMASE-TYPE TRANSPEPTIDASE FOLD CONTAINING PROTEIN"/>
    <property type="match status" value="1"/>
</dbReference>
<dbReference type="Pfam" id="PF13354">
    <property type="entry name" value="Beta-lactamase2"/>
    <property type="match status" value="1"/>
</dbReference>
<dbReference type="PRINTS" id="PR00118">
    <property type="entry name" value="BLACTAMASEA"/>
</dbReference>
<dbReference type="SUPFAM" id="SSF56601">
    <property type="entry name" value="beta-lactamase/transpeptidase-like"/>
    <property type="match status" value="1"/>
</dbReference>
<proteinExistence type="evidence at protein level"/>
<name>BLAG2_PSEAI</name>